<gene>
    <name type="primary">rpsA</name>
    <name type="ordered locus">jhp_0982</name>
</gene>
<name>RS1_HELPJ</name>
<comment type="function">
    <text evidence="1">Binds mRNA; thus facilitating recognition of the initiation point. It is needed to translate mRNA with a short Shine-Dalgarno (SD) purine-rich sequence (By similarity).</text>
</comment>
<comment type="similarity">
    <text evidence="3">Belongs to the bacterial ribosomal protein bS1 family.</text>
</comment>
<accession>Q9ZKF6</accession>
<dbReference type="EMBL" id="AE001439">
    <property type="protein sequence ID" value="AAD06555.1"/>
    <property type="molecule type" value="Genomic_DNA"/>
</dbReference>
<dbReference type="PIR" id="A71864">
    <property type="entry name" value="A71864"/>
</dbReference>
<dbReference type="RefSeq" id="WP_000034026.1">
    <property type="nucleotide sequence ID" value="NC_000921.1"/>
</dbReference>
<dbReference type="SMR" id="Q9ZKF6"/>
<dbReference type="KEGG" id="hpj:jhp_0982"/>
<dbReference type="eggNOG" id="COG0539">
    <property type="taxonomic scope" value="Bacteria"/>
</dbReference>
<dbReference type="eggNOG" id="COG1185">
    <property type="taxonomic scope" value="Bacteria"/>
</dbReference>
<dbReference type="Proteomes" id="UP000000804">
    <property type="component" value="Chromosome"/>
</dbReference>
<dbReference type="GO" id="GO:0022627">
    <property type="term" value="C:cytosolic small ribosomal subunit"/>
    <property type="evidence" value="ECO:0007669"/>
    <property type="project" value="TreeGrafter"/>
</dbReference>
<dbReference type="GO" id="GO:0003729">
    <property type="term" value="F:mRNA binding"/>
    <property type="evidence" value="ECO:0007669"/>
    <property type="project" value="TreeGrafter"/>
</dbReference>
<dbReference type="GO" id="GO:0003735">
    <property type="term" value="F:structural constituent of ribosome"/>
    <property type="evidence" value="ECO:0007669"/>
    <property type="project" value="InterPro"/>
</dbReference>
<dbReference type="GO" id="GO:0006412">
    <property type="term" value="P:translation"/>
    <property type="evidence" value="ECO:0007669"/>
    <property type="project" value="InterPro"/>
</dbReference>
<dbReference type="CDD" id="cd00164">
    <property type="entry name" value="S1_like"/>
    <property type="match status" value="1"/>
</dbReference>
<dbReference type="CDD" id="cd04465">
    <property type="entry name" value="S1_RPS1_repeat_ec2_hs2"/>
    <property type="match status" value="1"/>
</dbReference>
<dbReference type="FunFam" id="2.40.50.140:FF:000502">
    <property type="entry name" value="30S ribosomal protein S1"/>
    <property type="match status" value="1"/>
</dbReference>
<dbReference type="FunFam" id="2.40.50.140:FF:000103">
    <property type="entry name" value="protein RRP5 homolog"/>
    <property type="match status" value="1"/>
</dbReference>
<dbReference type="Gene3D" id="2.40.50.140">
    <property type="entry name" value="Nucleic acid-binding proteins"/>
    <property type="match status" value="6"/>
</dbReference>
<dbReference type="InterPro" id="IPR012340">
    <property type="entry name" value="NA-bd_OB-fold"/>
</dbReference>
<dbReference type="InterPro" id="IPR050437">
    <property type="entry name" value="Ribos_protein_bS1-like"/>
</dbReference>
<dbReference type="InterPro" id="IPR000110">
    <property type="entry name" value="Ribosomal_bS1"/>
</dbReference>
<dbReference type="InterPro" id="IPR035104">
    <property type="entry name" value="Ribosomal_protein_S1-like"/>
</dbReference>
<dbReference type="InterPro" id="IPR003029">
    <property type="entry name" value="S1_domain"/>
</dbReference>
<dbReference type="NCBIfam" id="NF004956">
    <property type="entry name" value="PRK06299.1-6"/>
    <property type="match status" value="1"/>
</dbReference>
<dbReference type="NCBIfam" id="TIGR00717">
    <property type="entry name" value="rpsA"/>
    <property type="match status" value="1"/>
</dbReference>
<dbReference type="PANTHER" id="PTHR10724">
    <property type="entry name" value="30S RIBOSOMAL PROTEIN S1"/>
    <property type="match status" value="1"/>
</dbReference>
<dbReference type="PANTHER" id="PTHR10724:SF7">
    <property type="entry name" value="SMALL RIBOSOMAL SUBUNIT PROTEIN BS1C"/>
    <property type="match status" value="1"/>
</dbReference>
<dbReference type="Pfam" id="PF00575">
    <property type="entry name" value="S1"/>
    <property type="match status" value="5"/>
</dbReference>
<dbReference type="PRINTS" id="PR00681">
    <property type="entry name" value="RIBOSOMALS1"/>
</dbReference>
<dbReference type="SMART" id="SM00316">
    <property type="entry name" value="S1"/>
    <property type="match status" value="6"/>
</dbReference>
<dbReference type="SUPFAM" id="SSF50249">
    <property type="entry name" value="Nucleic acid-binding proteins"/>
    <property type="match status" value="6"/>
</dbReference>
<dbReference type="PROSITE" id="PS50126">
    <property type="entry name" value="S1"/>
    <property type="match status" value="5"/>
</dbReference>
<evidence type="ECO:0000250" key="1"/>
<evidence type="ECO:0000255" key="2">
    <source>
        <dbReference type="PROSITE-ProRule" id="PRU00180"/>
    </source>
</evidence>
<evidence type="ECO:0000305" key="3"/>
<reference key="1">
    <citation type="journal article" date="1999" name="Nature">
        <title>Genomic sequence comparison of two unrelated isolates of the human gastric pathogen Helicobacter pylori.</title>
        <authorList>
            <person name="Alm R.A."/>
            <person name="Ling L.-S.L."/>
            <person name="Moir D.T."/>
            <person name="King B.L."/>
            <person name="Brown E.D."/>
            <person name="Doig P.C."/>
            <person name="Smith D.R."/>
            <person name="Noonan B."/>
            <person name="Guild B.C."/>
            <person name="deJonge B.L."/>
            <person name="Carmel G."/>
            <person name="Tummino P.J."/>
            <person name="Caruso A."/>
            <person name="Uria-Nickelsen M."/>
            <person name="Mills D.M."/>
            <person name="Ives C."/>
            <person name="Gibson R."/>
            <person name="Merberg D."/>
            <person name="Mills S.D."/>
            <person name="Jiang Q."/>
            <person name="Taylor D.E."/>
            <person name="Vovis G.F."/>
            <person name="Trust T.J."/>
        </authorList>
    </citation>
    <scope>NUCLEOTIDE SEQUENCE [LARGE SCALE GENOMIC DNA]</scope>
    <source>
        <strain>J99 / ATCC 700824</strain>
    </source>
</reference>
<keyword id="KW-0677">Repeat</keyword>
<keyword id="KW-0687">Ribonucleoprotein</keyword>
<keyword id="KW-0689">Ribosomal protein</keyword>
<keyword id="KW-0694">RNA-binding</keyword>
<organism>
    <name type="scientific">Helicobacter pylori (strain J99 / ATCC 700824)</name>
    <name type="common">Campylobacter pylori J99</name>
    <dbReference type="NCBI Taxonomy" id="85963"/>
    <lineage>
        <taxon>Bacteria</taxon>
        <taxon>Pseudomonadati</taxon>
        <taxon>Campylobacterota</taxon>
        <taxon>Epsilonproteobacteria</taxon>
        <taxon>Campylobacterales</taxon>
        <taxon>Helicobacteraceae</taxon>
        <taxon>Helicobacter</taxon>
    </lineage>
</organism>
<feature type="chain" id="PRO_0000196039" description="Small ribosomal subunit protein bS1">
    <location>
        <begin position="1"/>
        <end position="552"/>
    </location>
</feature>
<feature type="domain" description="S1 motif 1" evidence="2">
    <location>
        <begin position="31"/>
        <end position="101"/>
    </location>
</feature>
<feature type="domain" description="S1 motif 2" evidence="2">
    <location>
        <begin position="116"/>
        <end position="179"/>
    </location>
</feature>
<feature type="domain" description="S1 motif 3" evidence="2">
    <location>
        <begin position="200"/>
        <end position="268"/>
    </location>
</feature>
<feature type="domain" description="S1 motif 4" evidence="2">
    <location>
        <begin position="285"/>
        <end position="355"/>
    </location>
</feature>
<feature type="domain" description="S1 motif 5" evidence="2">
    <location>
        <begin position="372"/>
        <end position="440"/>
    </location>
</feature>
<feature type="domain" description="S1 motif 6" evidence="2">
    <location>
        <begin position="457"/>
        <end position="521"/>
    </location>
</feature>
<protein>
    <recommendedName>
        <fullName evidence="3">Small ribosomal subunit protein bS1</fullName>
    </recommendedName>
    <alternativeName>
        <fullName>30S ribosomal protein S1</fullName>
    </alternativeName>
</protein>
<proteinExistence type="inferred from homology"/>
<sequence length="552" mass="62528">MSKIADDQYFNDEEEDFAKLLEKEETLEKGTIKEGLIVSINENDGYAMVSVGGKTEGRLALNEITDEKGQLMYQKNDPIVVHVSEKGEHPSVSYKKAISQQKIQAKIEELGENYENAIIEGKIVGKNKGGYIVESQGVEYFLSRSHSSLKNDANHIGKRIKACIIRVDKENHSINISRKRFFEVNDKRQLEISKELLEATEPVLGVVRQITPFGIFVKFKGIDGLVHYSEISHKGPVNPEKYYKEGDEVYVKAIAYDEEKRRLSLSIKATIEDPWEEIQDKLKPGYAIKVVVSNIEHYGVFVDIGNDIEGFLHVSEISWDKNVSHPSHYLSVGQEIDVKIIDIDPKNRRLRVSLKQLTNRPFDVFESKHQVGDIVEGKVATLTDFGAFLNLGGVDGLLHNHDAFWDKDKKCKDHYKIGDVIKVKILKINKKDKKISLSAKHLVTSPTEEFAQKHKTDSVIQGKVVSIKDFGVFIHADGIDVLIKNEDLNPLKKDEIKIGQEITCVVVAIEKSNNKVRASVHRLERKKEKEELQAFNTSDDKMTLGDILKEKL</sequence>